<sequence length="440" mass="45267">MRRPLDPRDIPDELRRRLGLLDAVVIGLGSMIGAGIFAALAPAAYAAGSGLLLGLAVAAVVAYCNAISSARLAARYPASGGTYVYGRMRLGDFWGYLAGWGFVVGKTASCAAMALTVGFYVWPAQAHAVAVAVVVALTAVNYAGIQKSAWLTRSIVAVVLVVLTAVVVAAYGSGAADPARLDIGVDAHVWGMLQAAGLLFFAFAGYARIATLGEEVRDPARTIPRAIPLALGITLAVYALVAVAVIAVLGPQRLARAAAPLSEAMRVAGVNWLIPVVQIGAAVAALGSLLALILGVSRTTLAMARDRHLPRWLAAVHPRFKVPFRAELVVGAVVAALAATADIRGAIGFSSFGVLVYYAIANASALTLGLDEGRPRRLIPLVGLIGCVVLAFALPLSSVAAGAAVLGVGVAAYGVRRIITRRARQTDSGDTQRSGHPSAT</sequence>
<gene>
    <name type="ordered locus">Rv1999c</name>
    <name type="ORF">MTCY39.19</name>
</gene>
<keyword id="KW-1003">Cell membrane</keyword>
<keyword id="KW-0472">Membrane</keyword>
<keyword id="KW-1185">Reference proteome</keyword>
<keyword id="KW-0812">Transmembrane</keyword>
<keyword id="KW-1133">Transmembrane helix</keyword>
<keyword id="KW-0813">Transport</keyword>
<evidence type="ECO:0000250" key="1"/>
<evidence type="ECO:0000255" key="2"/>
<evidence type="ECO:0000305" key="3"/>
<organism>
    <name type="scientific">Mycobacterium tuberculosis (strain ATCC 25618 / H37Rv)</name>
    <dbReference type="NCBI Taxonomy" id="83332"/>
    <lineage>
        <taxon>Bacteria</taxon>
        <taxon>Bacillati</taxon>
        <taxon>Actinomycetota</taxon>
        <taxon>Actinomycetes</taxon>
        <taxon>Mycobacteriales</taxon>
        <taxon>Mycobacteriaceae</taxon>
        <taxon>Mycobacterium</taxon>
        <taxon>Mycobacterium tuberculosis complex</taxon>
    </lineage>
</organism>
<accession>P9WQM3</accession>
<accession>L0T9W4</accession>
<accession>P63349</accession>
<accession>Q10858</accession>
<feature type="chain" id="PRO_0000054227" description="Uncharacterized transporter Rv1999c">
    <location>
        <begin position="1"/>
        <end position="440"/>
    </location>
</feature>
<feature type="transmembrane region" description="Helical" evidence="2">
    <location>
        <begin position="24"/>
        <end position="44"/>
    </location>
</feature>
<feature type="transmembrane region" description="Helical" evidence="2">
    <location>
        <begin position="47"/>
        <end position="67"/>
    </location>
</feature>
<feature type="transmembrane region" description="Helical" evidence="2">
    <location>
        <begin position="93"/>
        <end position="113"/>
    </location>
</feature>
<feature type="transmembrane region" description="Helical" evidence="2">
    <location>
        <begin position="117"/>
        <end position="137"/>
    </location>
</feature>
<feature type="transmembrane region" description="Helical" evidence="2">
    <location>
        <begin position="155"/>
        <end position="175"/>
    </location>
</feature>
<feature type="transmembrane region" description="Helical" evidence="2">
    <location>
        <begin position="183"/>
        <end position="203"/>
    </location>
</feature>
<feature type="transmembrane region" description="Helical" evidence="2">
    <location>
        <begin position="229"/>
        <end position="249"/>
    </location>
</feature>
<feature type="transmembrane region" description="Helical" evidence="2">
    <location>
        <begin position="276"/>
        <end position="296"/>
    </location>
</feature>
<feature type="transmembrane region" description="Helical" evidence="2">
    <location>
        <begin position="323"/>
        <end position="343"/>
    </location>
</feature>
<feature type="transmembrane region" description="Helical" evidence="2">
    <location>
        <begin position="346"/>
        <end position="366"/>
    </location>
</feature>
<feature type="transmembrane region" description="Helical" evidence="2">
    <location>
        <begin position="379"/>
        <end position="399"/>
    </location>
</feature>
<feature type="transmembrane region" description="Helical" evidence="2">
    <location>
        <begin position="400"/>
        <end position="420"/>
    </location>
</feature>
<name>Y1999_MYCTU</name>
<comment type="function">
    <text evidence="1">Probable amino-acid or metabolite transport protein.</text>
</comment>
<comment type="subcellular location">
    <subcellularLocation>
        <location evidence="3">Cell membrane</location>
        <topology evidence="3">Multi-pass membrane protein</topology>
    </subcellularLocation>
</comment>
<comment type="similarity">
    <text evidence="3">Belongs to the amino acid-polyamine-organocation (APC) superfamily.</text>
</comment>
<dbReference type="EMBL" id="AL123456">
    <property type="protein sequence ID" value="CCP44771.1"/>
    <property type="molecule type" value="Genomic_DNA"/>
</dbReference>
<dbReference type="PIR" id="E70758">
    <property type="entry name" value="E70758"/>
</dbReference>
<dbReference type="RefSeq" id="NP_216515.1">
    <property type="nucleotide sequence ID" value="NC_000962.3"/>
</dbReference>
<dbReference type="RefSeq" id="WP_003410039.1">
    <property type="nucleotide sequence ID" value="NZ_NVQJ01000043.1"/>
</dbReference>
<dbReference type="SMR" id="P9WQM3"/>
<dbReference type="STRING" id="83332.Rv1999c"/>
<dbReference type="PaxDb" id="83332-Rv1999c"/>
<dbReference type="DNASU" id="888881"/>
<dbReference type="GeneID" id="888881"/>
<dbReference type="KEGG" id="mtu:Rv1999c"/>
<dbReference type="KEGG" id="mtv:RVBD_1999c"/>
<dbReference type="TubercuList" id="Rv1999c"/>
<dbReference type="eggNOG" id="COG0531">
    <property type="taxonomic scope" value="Bacteria"/>
</dbReference>
<dbReference type="InParanoid" id="P9WQM3"/>
<dbReference type="OrthoDB" id="259687at2"/>
<dbReference type="PhylomeDB" id="P9WQM3"/>
<dbReference type="Proteomes" id="UP000001584">
    <property type="component" value="Chromosome"/>
</dbReference>
<dbReference type="GO" id="GO:0005886">
    <property type="term" value="C:plasma membrane"/>
    <property type="evidence" value="ECO:0007669"/>
    <property type="project" value="UniProtKB-SubCell"/>
</dbReference>
<dbReference type="GO" id="GO:0022857">
    <property type="term" value="F:transmembrane transporter activity"/>
    <property type="evidence" value="ECO:0007669"/>
    <property type="project" value="InterPro"/>
</dbReference>
<dbReference type="Gene3D" id="1.20.1740.10">
    <property type="entry name" value="Amino acid/polyamine transporter I"/>
    <property type="match status" value="1"/>
</dbReference>
<dbReference type="InterPro" id="IPR002293">
    <property type="entry name" value="AA/rel_permease1"/>
</dbReference>
<dbReference type="InterPro" id="IPR050367">
    <property type="entry name" value="APC_superfamily"/>
</dbReference>
<dbReference type="PANTHER" id="PTHR42770">
    <property type="entry name" value="AMINO ACID TRANSPORTER-RELATED"/>
    <property type="match status" value="1"/>
</dbReference>
<dbReference type="PANTHER" id="PTHR42770:SF7">
    <property type="entry name" value="MEMBRANE PROTEIN"/>
    <property type="match status" value="1"/>
</dbReference>
<dbReference type="Pfam" id="PF13520">
    <property type="entry name" value="AA_permease_2"/>
    <property type="match status" value="1"/>
</dbReference>
<dbReference type="PIRSF" id="PIRSF006060">
    <property type="entry name" value="AA_transporter"/>
    <property type="match status" value="1"/>
</dbReference>
<proteinExistence type="evidence at protein level"/>
<reference key="1">
    <citation type="journal article" date="1998" name="Nature">
        <title>Deciphering the biology of Mycobacterium tuberculosis from the complete genome sequence.</title>
        <authorList>
            <person name="Cole S.T."/>
            <person name="Brosch R."/>
            <person name="Parkhill J."/>
            <person name="Garnier T."/>
            <person name="Churcher C.M."/>
            <person name="Harris D.E."/>
            <person name="Gordon S.V."/>
            <person name="Eiglmeier K."/>
            <person name="Gas S."/>
            <person name="Barry C.E. III"/>
            <person name="Tekaia F."/>
            <person name="Badcock K."/>
            <person name="Basham D."/>
            <person name="Brown D."/>
            <person name="Chillingworth T."/>
            <person name="Connor R."/>
            <person name="Davies R.M."/>
            <person name="Devlin K."/>
            <person name="Feltwell T."/>
            <person name="Gentles S."/>
            <person name="Hamlin N."/>
            <person name="Holroyd S."/>
            <person name="Hornsby T."/>
            <person name="Jagels K."/>
            <person name="Krogh A."/>
            <person name="McLean J."/>
            <person name="Moule S."/>
            <person name="Murphy L.D."/>
            <person name="Oliver S."/>
            <person name="Osborne J."/>
            <person name="Quail M.A."/>
            <person name="Rajandream M.A."/>
            <person name="Rogers J."/>
            <person name="Rutter S."/>
            <person name="Seeger K."/>
            <person name="Skelton S."/>
            <person name="Squares S."/>
            <person name="Squares R."/>
            <person name="Sulston J.E."/>
            <person name="Taylor K."/>
            <person name="Whitehead S."/>
            <person name="Barrell B.G."/>
        </authorList>
    </citation>
    <scope>NUCLEOTIDE SEQUENCE [LARGE SCALE GENOMIC DNA]</scope>
    <source>
        <strain>ATCC 25618 / H37Rv</strain>
    </source>
</reference>
<reference key="2">
    <citation type="journal article" date="2011" name="Mol. Cell. Proteomics">
        <title>Proteogenomic analysis of Mycobacterium tuberculosis by high resolution mass spectrometry.</title>
        <authorList>
            <person name="Kelkar D.S."/>
            <person name="Kumar D."/>
            <person name="Kumar P."/>
            <person name="Balakrishnan L."/>
            <person name="Muthusamy B."/>
            <person name="Yadav A.K."/>
            <person name="Shrivastava P."/>
            <person name="Marimuthu A."/>
            <person name="Anand S."/>
            <person name="Sundaram H."/>
            <person name="Kingsbury R."/>
            <person name="Harsha H.C."/>
            <person name="Nair B."/>
            <person name="Prasad T.S."/>
            <person name="Chauhan D.S."/>
            <person name="Katoch K."/>
            <person name="Katoch V.M."/>
            <person name="Kumar P."/>
            <person name="Chaerkady R."/>
            <person name="Ramachandran S."/>
            <person name="Dash D."/>
            <person name="Pandey A."/>
        </authorList>
    </citation>
    <scope>IDENTIFICATION BY MASS SPECTROMETRY [LARGE SCALE ANALYSIS]</scope>
    <source>
        <strain>ATCC 25618 / H37Rv</strain>
    </source>
</reference>
<protein>
    <recommendedName>
        <fullName>Uncharacterized transporter Rv1999c</fullName>
    </recommendedName>
</protein>